<name>PGK_COLP3</name>
<evidence type="ECO:0000255" key="1">
    <source>
        <dbReference type="HAMAP-Rule" id="MF_00145"/>
    </source>
</evidence>
<feature type="chain" id="PRO_1000057979" description="Phosphoglycerate kinase">
    <location>
        <begin position="1"/>
        <end position="391"/>
    </location>
</feature>
<feature type="binding site" evidence="1">
    <location>
        <begin position="21"/>
        <end position="23"/>
    </location>
    <ligand>
        <name>substrate</name>
    </ligand>
</feature>
<feature type="binding site" evidence="1">
    <location>
        <position position="36"/>
    </location>
    <ligand>
        <name>substrate</name>
    </ligand>
</feature>
<feature type="binding site" evidence="1">
    <location>
        <begin position="59"/>
        <end position="62"/>
    </location>
    <ligand>
        <name>substrate</name>
    </ligand>
</feature>
<feature type="binding site" evidence="1">
    <location>
        <position position="113"/>
    </location>
    <ligand>
        <name>substrate</name>
    </ligand>
</feature>
<feature type="binding site" evidence="1">
    <location>
        <position position="146"/>
    </location>
    <ligand>
        <name>substrate</name>
    </ligand>
</feature>
<feature type="binding site" evidence="1">
    <location>
        <position position="197"/>
    </location>
    <ligand>
        <name>ATP</name>
        <dbReference type="ChEBI" id="CHEBI:30616"/>
    </ligand>
</feature>
<feature type="binding site" evidence="1">
    <location>
        <position position="319"/>
    </location>
    <ligand>
        <name>ATP</name>
        <dbReference type="ChEBI" id="CHEBI:30616"/>
    </ligand>
</feature>
<feature type="binding site" evidence="1">
    <location>
        <begin position="345"/>
        <end position="348"/>
    </location>
    <ligand>
        <name>ATP</name>
        <dbReference type="ChEBI" id="CHEBI:30616"/>
    </ligand>
</feature>
<sequence>MSIIKMADLTLANQRVLIREDLNVPVTDGKITSDARLRAALPTLKLALEAGAKVMVMSHLGRPTEGQPEEKFSLKPVTDYLSAALNYPVRLVTDYLDGVDVAAGELVVFENIRFNLGEKKNDDTLAKKLAALCDVFVMDAFGTAHRAQASTHGVAKFAATACAGPLLSGELEALGKALDNPARPLVAIVGGSKVSTKLTVLDSLAGIVDQLVVGGGIANTFIAADGHNVGKSLYEADLVEEATRLTKQAKANNGDIPVPSDVVVATEFSASATATLKPVNEVTADEMIFDIGPETAKALTEIIANAGTIVWNGPVGVFEFDQFGEGTKVIAQAIADSSAFSIAGGGDTLAAVDKYEIADKISYISTGGGAFLEFLEGKKLPAVEILEQRAK</sequence>
<accession>Q47XD4</accession>
<keyword id="KW-0067">ATP-binding</keyword>
<keyword id="KW-0963">Cytoplasm</keyword>
<keyword id="KW-0324">Glycolysis</keyword>
<keyword id="KW-0418">Kinase</keyword>
<keyword id="KW-0547">Nucleotide-binding</keyword>
<keyword id="KW-0808">Transferase</keyword>
<comment type="catalytic activity">
    <reaction evidence="1">
        <text>(2R)-3-phosphoglycerate + ATP = (2R)-3-phospho-glyceroyl phosphate + ADP</text>
        <dbReference type="Rhea" id="RHEA:14801"/>
        <dbReference type="ChEBI" id="CHEBI:30616"/>
        <dbReference type="ChEBI" id="CHEBI:57604"/>
        <dbReference type="ChEBI" id="CHEBI:58272"/>
        <dbReference type="ChEBI" id="CHEBI:456216"/>
        <dbReference type="EC" id="2.7.2.3"/>
    </reaction>
</comment>
<comment type="pathway">
    <text evidence="1">Carbohydrate degradation; glycolysis; pyruvate from D-glyceraldehyde 3-phosphate: step 2/5.</text>
</comment>
<comment type="subunit">
    <text evidence="1">Monomer.</text>
</comment>
<comment type="subcellular location">
    <subcellularLocation>
        <location evidence="1">Cytoplasm</location>
    </subcellularLocation>
</comment>
<comment type="similarity">
    <text evidence="1">Belongs to the phosphoglycerate kinase family.</text>
</comment>
<proteinExistence type="inferred from homology"/>
<reference key="1">
    <citation type="journal article" date="2005" name="Proc. Natl. Acad. Sci. U.S.A.">
        <title>The psychrophilic lifestyle as revealed by the genome sequence of Colwellia psychrerythraea 34H through genomic and proteomic analyses.</title>
        <authorList>
            <person name="Methe B.A."/>
            <person name="Nelson K.E."/>
            <person name="Deming J.W."/>
            <person name="Momen B."/>
            <person name="Melamud E."/>
            <person name="Zhang X."/>
            <person name="Moult J."/>
            <person name="Madupu R."/>
            <person name="Nelson W.C."/>
            <person name="Dodson R.J."/>
            <person name="Brinkac L.M."/>
            <person name="Daugherty S.C."/>
            <person name="Durkin A.S."/>
            <person name="DeBoy R.T."/>
            <person name="Kolonay J.F."/>
            <person name="Sullivan S.A."/>
            <person name="Zhou L."/>
            <person name="Davidsen T.M."/>
            <person name="Wu M."/>
            <person name="Huston A.L."/>
            <person name="Lewis M."/>
            <person name="Weaver B."/>
            <person name="Weidman J.F."/>
            <person name="Khouri H."/>
            <person name="Utterback T.R."/>
            <person name="Feldblyum T.V."/>
            <person name="Fraser C.M."/>
        </authorList>
    </citation>
    <scope>NUCLEOTIDE SEQUENCE [LARGE SCALE GENOMIC DNA]</scope>
    <source>
        <strain>34H / ATCC BAA-681</strain>
    </source>
</reference>
<organism>
    <name type="scientific">Colwellia psychrerythraea (strain 34H / ATCC BAA-681)</name>
    <name type="common">Vibrio psychroerythus</name>
    <dbReference type="NCBI Taxonomy" id="167879"/>
    <lineage>
        <taxon>Bacteria</taxon>
        <taxon>Pseudomonadati</taxon>
        <taxon>Pseudomonadota</taxon>
        <taxon>Gammaproteobacteria</taxon>
        <taxon>Alteromonadales</taxon>
        <taxon>Colwelliaceae</taxon>
        <taxon>Colwellia</taxon>
    </lineage>
</organism>
<dbReference type="EC" id="2.7.2.3" evidence="1"/>
<dbReference type="EMBL" id="CP000083">
    <property type="protein sequence ID" value="AAZ26850.1"/>
    <property type="molecule type" value="Genomic_DNA"/>
</dbReference>
<dbReference type="RefSeq" id="WP_011044622.1">
    <property type="nucleotide sequence ID" value="NC_003910.7"/>
</dbReference>
<dbReference type="SMR" id="Q47XD4"/>
<dbReference type="STRING" id="167879.CPS_3874"/>
<dbReference type="KEGG" id="cps:CPS_3874"/>
<dbReference type="eggNOG" id="COG0126">
    <property type="taxonomic scope" value="Bacteria"/>
</dbReference>
<dbReference type="HOGENOM" id="CLU_025427_0_2_6"/>
<dbReference type="UniPathway" id="UPA00109">
    <property type="reaction ID" value="UER00185"/>
</dbReference>
<dbReference type="Proteomes" id="UP000000547">
    <property type="component" value="Chromosome"/>
</dbReference>
<dbReference type="GO" id="GO:0005829">
    <property type="term" value="C:cytosol"/>
    <property type="evidence" value="ECO:0007669"/>
    <property type="project" value="TreeGrafter"/>
</dbReference>
<dbReference type="GO" id="GO:0043531">
    <property type="term" value="F:ADP binding"/>
    <property type="evidence" value="ECO:0007669"/>
    <property type="project" value="TreeGrafter"/>
</dbReference>
<dbReference type="GO" id="GO:0005524">
    <property type="term" value="F:ATP binding"/>
    <property type="evidence" value="ECO:0007669"/>
    <property type="project" value="UniProtKB-KW"/>
</dbReference>
<dbReference type="GO" id="GO:0004618">
    <property type="term" value="F:phosphoglycerate kinase activity"/>
    <property type="evidence" value="ECO:0007669"/>
    <property type="project" value="UniProtKB-UniRule"/>
</dbReference>
<dbReference type="GO" id="GO:0006094">
    <property type="term" value="P:gluconeogenesis"/>
    <property type="evidence" value="ECO:0007669"/>
    <property type="project" value="TreeGrafter"/>
</dbReference>
<dbReference type="GO" id="GO:0006096">
    <property type="term" value="P:glycolytic process"/>
    <property type="evidence" value="ECO:0007669"/>
    <property type="project" value="UniProtKB-UniRule"/>
</dbReference>
<dbReference type="FunFam" id="3.40.50.1260:FF:000001">
    <property type="entry name" value="Phosphoglycerate kinase"/>
    <property type="match status" value="1"/>
</dbReference>
<dbReference type="FunFam" id="3.40.50.1260:FF:000002">
    <property type="entry name" value="Phosphoglycerate kinase"/>
    <property type="match status" value="1"/>
</dbReference>
<dbReference type="Gene3D" id="3.40.50.1260">
    <property type="entry name" value="Phosphoglycerate kinase, N-terminal domain"/>
    <property type="match status" value="2"/>
</dbReference>
<dbReference type="HAMAP" id="MF_00145">
    <property type="entry name" value="Phosphoglyc_kinase"/>
    <property type="match status" value="1"/>
</dbReference>
<dbReference type="InterPro" id="IPR001576">
    <property type="entry name" value="Phosphoglycerate_kinase"/>
</dbReference>
<dbReference type="InterPro" id="IPR015911">
    <property type="entry name" value="Phosphoglycerate_kinase_CS"/>
</dbReference>
<dbReference type="InterPro" id="IPR015824">
    <property type="entry name" value="Phosphoglycerate_kinase_N"/>
</dbReference>
<dbReference type="InterPro" id="IPR036043">
    <property type="entry name" value="Phosphoglycerate_kinase_sf"/>
</dbReference>
<dbReference type="PANTHER" id="PTHR11406">
    <property type="entry name" value="PHOSPHOGLYCERATE KINASE"/>
    <property type="match status" value="1"/>
</dbReference>
<dbReference type="PANTHER" id="PTHR11406:SF23">
    <property type="entry name" value="PHOSPHOGLYCERATE KINASE 1, CHLOROPLASTIC-RELATED"/>
    <property type="match status" value="1"/>
</dbReference>
<dbReference type="Pfam" id="PF00162">
    <property type="entry name" value="PGK"/>
    <property type="match status" value="1"/>
</dbReference>
<dbReference type="PIRSF" id="PIRSF000724">
    <property type="entry name" value="Pgk"/>
    <property type="match status" value="1"/>
</dbReference>
<dbReference type="PRINTS" id="PR00477">
    <property type="entry name" value="PHGLYCKINASE"/>
</dbReference>
<dbReference type="SUPFAM" id="SSF53748">
    <property type="entry name" value="Phosphoglycerate kinase"/>
    <property type="match status" value="1"/>
</dbReference>
<dbReference type="PROSITE" id="PS00111">
    <property type="entry name" value="PGLYCERATE_KINASE"/>
    <property type="match status" value="1"/>
</dbReference>
<protein>
    <recommendedName>
        <fullName evidence="1">Phosphoglycerate kinase</fullName>
        <ecNumber evidence="1">2.7.2.3</ecNumber>
    </recommendedName>
</protein>
<gene>
    <name evidence="1" type="primary">pgk</name>
    <name type="ordered locus">CPS_3874</name>
</gene>